<reference key="1">
    <citation type="journal article" date="1999" name="Nature">
        <title>Sequence and analysis of chromosome 4 of the plant Arabidopsis thaliana.</title>
        <authorList>
            <person name="Mayer K.F.X."/>
            <person name="Schueller C."/>
            <person name="Wambutt R."/>
            <person name="Murphy G."/>
            <person name="Volckaert G."/>
            <person name="Pohl T."/>
            <person name="Duesterhoeft A."/>
            <person name="Stiekema W."/>
            <person name="Entian K.-D."/>
            <person name="Terryn N."/>
            <person name="Harris B."/>
            <person name="Ansorge W."/>
            <person name="Brandt P."/>
            <person name="Grivell L.A."/>
            <person name="Rieger M."/>
            <person name="Weichselgartner M."/>
            <person name="de Simone V."/>
            <person name="Obermaier B."/>
            <person name="Mache R."/>
            <person name="Mueller M."/>
            <person name="Kreis M."/>
            <person name="Delseny M."/>
            <person name="Puigdomenech P."/>
            <person name="Watson M."/>
            <person name="Schmidtheini T."/>
            <person name="Reichert B."/>
            <person name="Portetelle D."/>
            <person name="Perez-Alonso M."/>
            <person name="Boutry M."/>
            <person name="Bancroft I."/>
            <person name="Vos P."/>
            <person name="Hoheisel J."/>
            <person name="Zimmermann W."/>
            <person name="Wedler H."/>
            <person name="Ridley P."/>
            <person name="Langham S.-A."/>
            <person name="McCullagh B."/>
            <person name="Bilham L."/>
            <person name="Robben J."/>
            <person name="van der Schueren J."/>
            <person name="Grymonprez B."/>
            <person name="Chuang Y.-J."/>
            <person name="Vandenbussche F."/>
            <person name="Braeken M."/>
            <person name="Weltjens I."/>
            <person name="Voet M."/>
            <person name="Bastiaens I."/>
            <person name="Aert R."/>
            <person name="Defoor E."/>
            <person name="Weitzenegger T."/>
            <person name="Bothe G."/>
            <person name="Ramsperger U."/>
            <person name="Hilbert H."/>
            <person name="Braun M."/>
            <person name="Holzer E."/>
            <person name="Brandt A."/>
            <person name="Peters S."/>
            <person name="van Staveren M."/>
            <person name="Dirkse W."/>
            <person name="Mooijman P."/>
            <person name="Klein Lankhorst R."/>
            <person name="Rose M."/>
            <person name="Hauf J."/>
            <person name="Koetter P."/>
            <person name="Berneiser S."/>
            <person name="Hempel S."/>
            <person name="Feldpausch M."/>
            <person name="Lamberth S."/>
            <person name="Van den Daele H."/>
            <person name="De Keyser A."/>
            <person name="Buysshaert C."/>
            <person name="Gielen J."/>
            <person name="Villarroel R."/>
            <person name="De Clercq R."/>
            <person name="van Montagu M."/>
            <person name="Rogers J."/>
            <person name="Cronin A."/>
            <person name="Quail M.A."/>
            <person name="Bray-Allen S."/>
            <person name="Clark L."/>
            <person name="Doggett J."/>
            <person name="Hall S."/>
            <person name="Kay M."/>
            <person name="Lennard N."/>
            <person name="McLay K."/>
            <person name="Mayes R."/>
            <person name="Pettett A."/>
            <person name="Rajandream M.A."/>
            <person name="Lyne M."/>
            <person name="Benes V."/>
            <person name="Rechmann S."/>
            <person name="Borkova D."/>
            <person name="Bloecker H."/>
            <person name="Scharfe M."/>
            <person name="Grimm M."/>
            <person name="Loehnert T.-H."/>
            <person name="Dose S."/>
            <person name="de Haan M."/>
            <person name="Maarse A.C."/>
            <person name="Schaefer M."/>
            <person name="Mueller-Auer S."/>
            <person name="Gabel C."/>
            <person name="Fuchs M."/>
            <person name="Fartmann B."/>
            <person name="Granderath K."/>
            <person name="Dauner D."/>
            <person name="Herzl A."/>
            <person name="Neumann S."/>
            <person name="Argiriou A."/>
            <person name="Vitale D."/>
            <person name="Liguori R."/>
            <person name="Piravandi E."/>
            <person name="Massenet O."/>
            <person name="Quigley F."/>
            <person name="Clabauld G."/>
            <person name="Muendlein A."/>
            <person name="Felber R."/>
            <person name="Schnabl S."/>
            <person name="Hiller R."/>
            <person name="Schmidt W."/>
            <person name="Lecharny A."/>
            <person name="Aubourg S."/>
            <person name="Chefdor F."/>
            <person name="Cooke R."/>
            <person name="Berger C."/>
            <person name="Monfort A."/>
            <person name="Casacuberta E."/>
            <person name="Gibbons T."/>
            <person name="Weber N."/>
            <person name="Vandenbol M."/>
            <person name="Bargues M."/>
            <person name="Terol J."/>
            <person name="Torres A."/>
            <person name="Perez-Perez A."/>
            <person name="Purnelle B."/>
            <person name="Bent E."/>
            <person name="Johnson S."/>
            <person name="Tacon D."/>
            <person name="Jesse T."/>
            <person name="Heijnen L."/>
            <person name="Schwarz S."/>
            <person name="Scholler P."/>
            <person name="Heber S."/>
            <person name="Francs P."/>
            <person name="Bielke C."/>
            <person name="Frishman D."/>
            <person name="Haase D."/>
            <person name="Lemcke K."/>
            <person name="Mewes H.-W."/>
            <person name="Stocker S."/>
            <person name="Zaccaria P."/>
            <person name="Bevan M."/>
            <person name="Wilson R.K."/>
            <person name="de la Bastide M."/>
            <person name="Habermann K."/>
            <person name="Parnell L."/>
            <person name="Dedhia N."/>
            <person name="Gnoj L."/>
            <person name="Schutz K."/>
            <person name="Huang E."/>
            <person name="Spiegel L."/>
            <person name="Sekhon M."/>
            <person name="Murray J."/>
            <person name="Sheet P."/>
            <person name="Cordes M."/>
            <person name="Abu-Threideh J."/>
            <person name="Stoneking T."/>
            <person name="Kalicki J."/>
            <person name="Graves T."/>
            <person name="Harmon G."/>
            <person name="Edwards J."/>
            <person name="Latreille P."/>
            <person name="Courtney L."/>
            <person name="Cloud J."/>
            <person name="Abbott A."/>
            <person name="Scott K."/>
            <person name="Johnson D."/>
            <person name="Minx P."/>
            <person name="Bentley D."/>
            <person name="Fulton B."/>
            <person name="Miller N."/>
            <person name="Greco T."/>
            <person name="Kemp K."/>
            <person name="Kramer J."/>
            <person name="Fulton L."/>
            <person name="Mardis E."/>
            <person name="Dante M."/>
            <person name="Pepin K."/>
            <person name="Hillier L.W."/>
            <person name="Nelson J."/>
            <person name="Spieth J."/>
            <person name="Ryan E."/>
            <person name="Andrews S."/>
            <person name="Geisel C."/>
            <person name="Layman D."/>
            <person name="Du H."/>
            <person name="Ali J."/>
            <person name="Berghoff A."/>
            <person name="Jones K."/>
            <person name="Drone K."/>
            <person name="Cotton M."/>
            <person name="Joshu C."/>
            <person name="Antonoiu B."/>
            <person name="Zidanic M."/>
            <person name="Strong C."/>
            <person name="Sun H."/>
            <person name="Lamar B."/>
            <person name="Yordan C."/>
            <person name="Ma P."/>
            <person name="Zhong J."/>
            <person name="Preston R."/>
            <person name="Vil D."/>
            <person name="Shekher M."/>
            <person name="Matero A."/>
            <person name="Shah R."/>
            <person name="Swaby I.K."/>
            <person name="O'Shaughnessy A."/>
            <person name="Rodriguez M."/>
            <person name="Hoffman J."/>
            <person name="Till S."/>
            <person name="Granat S."/>
            <person name="Shohdy N."/>
            <person name="Hasegawa A."/>
            <person name="Hameed A."/>
            <person name="Lodhi M."/>
            <person name="Johnson A."/>
            <person name="Chen E."/>
            <person name="Marra M.A."/>
            <person name="Martienssen R."/>
            <person name="McCombie W.R."/>
        </authorList>
    </citation>
    <scope>NUCLEOTIDE SEQUENCE [LARGE SCALE GENOMIC DNA]</scope>
    <source>
        <strain>cv. Columbia</strain>
    </source>
</reference>
<reference key="2">
    <citation type="journal article" date="2017" name="Plant J.">
        <title>Araport11: a complete reannotation of the Arabidopsis thaliana reference genome.</title>
        <authorList>
            <person name="Cheng C.Y."/>
            <person name="Krishnakumar V."/>
            <person name="Chan A.P."/>
            <person name="Thibaud-Nissen F."/>
            <person name="Schobel S."/>
            <person name="Town C.D."/>
        </authorList>
    </citation>
    <scope>GENOME REANNOTATION</scope>
    <source>
        <strain>cv. Columbia</strain>
    </source>
</reference>
<reference key="3">
    <citation type="submission" date="2006-05" db="EMBL/GenBank/DDBJ databases">
        <title>Arabidopsis ORF clones.</title>
        <authorList>
            <person name="Shinn P."/>
            <person name="Chen H."/>
            <person name="Kim C.J."/>
            <person name="Quinitio C."/>
            <person name="Ecker J.R."/>
        </authorList>
    </citation>
    <scope>NUCLEOTIDE SEQUENCE [LARGE SCALE MRNA]</scope>
    <source>
        <strain>cv. Columbia</strain>
    </source>
</reference>
<protein>
    <recommendedName>
        <fullName evidence="4">Ribonuclease III domain-containing protein RNC1, chloroplastic</fullName>
    </recommendedName>
    <alternativeName>
        <fullName evidence="4">Chloroplast ribonuclease III domain protein</fullName>
    </alternativeName>
</protein>
<name>RNC1_ARATH</name>
<feature type="transit peptide" description="Chloroplast" evidence="2">
    <location>
        <begin position="1"/>
        <end position="51"/>
    </location>
</feature>
<feature type="chain" id="PRO_0000435537" description="Ribonuclease III domain-containing protein RNC1, chloroplastic">
    <location>
        <begin position="52"/>
        <end position="537"/>
    </location>
</feature>
<feature type="domain" description="RNase III 1" evidence="3">
    <location>
        <begin position="141"/>
        <end position="283"/>
    </location>
</feature>
<feature type="domain" description="RNase III 2" evidence="3">
    <location>
        <begin position="415"/>
        <end position="515"/>
    </location>
</feature>
<gene>
    <name evidence="4" type="primary">RNC1</name>
    <name evidence="5" type="ordered locus">At4g37510</name>
    <name evidence="6" type="ORF">F6G17.160</name>
</gene>
<organism>
    <name type="scientific">Arabidopsis thaliana</name>
    <name type="common">Mouse-ear cress</name>
    <dbReference type="NCBI Taxonomy" id="3702"/>
    <lineage>
        <taxon>Eukaryota</taxon>
        <taxon>Viridiplantae</taxon>
        <taxon>Streptophyta</taxon>
        <taxon>Embryophyta</taxon>
        <taxon>Tracheophyta</taxon>
        <taxon>Spermatophyta</taxon>
        <taxon>Magnoliopsida</taxon>
        <taxon>eudicotyledons</taxon>
        <taxon>Gunneridae</taxon>
        <taxon>Pentapetalae</taxon>
        <taxon>rosids</taxon>
        <taxon>malvids</taxon>
        <taxon>Brassicales</taxon>
        <taxon>Brassicaceae</taxon>
        <taxon>Camelineae</taxon>
        <taxon>Arabidopsis</taxon>
    </lineage>
</organism>
<keyword id="KW-0150">Chloroplast</keyword>
<keyword id="KW-0507">mRNA processing</keyword>
<keyword id="KW-0508">mRNA splicing</keyword>
<keyword id="KW-0934">Plastid</keyword>
<keyword id="KW-1185">Reference proteome</keyword>
<keyword id="KW-0677">Repeat</keyword>
<keyword id="KW-0687">Ribonucleoprotein</keyword>
<keyword id="KW-0694">RNA-binding</keyword>
<keyword id="KW-0809">Transit peptide</keyword>
<accession>Q9SZV0</accession>
<proteinExistence type="evidence at transcript level"/>
<dbReference type="EMBL" id="AL035601">
    <property type="protein sequence ID" value="CAB38218.1"/>
    <property type="molecule type" value="Genomic_DNA"/>
</dbReference>
<dbReference type="EMBL" id="AL161591">
    <property type="protein sequence ID" value="CAB80416.1"/>
    <property type="molecule type" value="Genomic_DNA"/>
</dbReference>
<dbReference type="EMBL" id="CP002687">
    <property type="protein sequence ID" value="AEE86803.1"/>
    <property type="molecule type" value="Genomic_DNA"/>
</dbReference>
<dbReference type="EMBL" id="BT025333">
    <property type="protein sequence ID" value="ABF57289.1"/>
    <property type="molecule type" value="mRNA"/>
</dbReference>
<dbReference type="PIR" id="T04745">
    <property type="entry name" value="T04745"/>
</dbReference>
<dbReference type="RefSeq" id="NP_195467.1">
    <property type="nucleotide sequence ID" value="NM_119915.4"/>
</dbReference>
<dbReference type="SMR" id="Q9SZV0"/>
<dbReference type="FunCoup" id="Q9SZV0">
    <property type="interactions" value="2280"/>
</dbReference>
<dbReference type="STRING" id="3702.Q9SZV0"/>
<dbReference type="iPTMnet" id="Q9SZV0"/>
<dbReference type="PaxDb" id="3702-AT4G37510.1"/>
<dbReference type="ProteomicsDB" id="228167"/>
<dbReference type="EnsemblPlants" id="AT4G37510.1">
    <property type="protein sequence ID" value="AT4G37510.1"/>
    <property type="gene ID" value="AT4G37510"/>
</dbReference>
<dbReference type="GeneID" id="829906"/>
<dbReference type="Gramene" id="AT4G37510.1">
    <property type="protein sequence ID" value="AT4G37510.1"/>
    <property type="gene ID" value="AT4G37510"/>
</dbReference>
<dbReference type="KEGG" id="ath:AT4G37510"/>
<dbReference type="Araport" id="AT4G37510"/>
<dbReference type="TAIR" id="AT4G37510"/>
<dbReference type="eggNOG" id="ENOG502QSFE">
    <property type="taxonomic scope" value="Eukaryota"/>
</dbReference>
<dbReference type="HOGENOM" id="CLU_018164_0_0_1"/>
<dbReference type="InParanoid" id="Q9SZV0"/>
<dbReference type="OMA" id="YMAFQHP"/>
<dbReference type="PhylomeDB" id="Q9SZV0"/>
<dbReference type="PRO" id="PR:Q9SZV0"/>
<dbReference type="Proteomes" id="UP000006548">
    <property type="component" value="Chromosome 4"/>
</dbReference>
<dbReference type="ExpressionAtlas" id="Q9SZV0">
    <property type="expression patterns" value="baseline and differential"/>
</dbReference>
<dbReference type="GO" id="GO:0009507">
    <property type="term" value="C:chloroplast"/>
    <property type="evidence" value="ECO:0007669"/>
    <property type="project" value="UniProtKB-SubCell"/>
</dbReference>
<dbReference type="GO" id="GO:1990904">
    <property type="term" value="C:ribonucleoprotein complex"/>
    <property type="evidence" value="ECO:0007669"/>
    <property type="project" value="UniProtKB-KW"/>
</dbReference>
<dbReference type="GO" id="GO:0003729">
    <property type="term" value="F:mRNA binding"/>
    <property type="evidence" value="ECO:0000314"/>
    <property type="project" value="TAIR"/>
</dbReference>
<dbReference type="GO" id="GO:0004525">
    <property type="term" value="F:ribonuclease III activity"/>
    <property type="evidence" value="ECO:0007669"/>
    <property type="project" value="InterPro"/>
</dbReference>
<dbReference type="GO" id="GO:0006397">
    <property type="term" value="P:mRNA processing"/>
    <property type="evidence" value="ECO:0007669"/>
    <property type="project" value="UniProtKB-KW"/>
</dbReference>
<dbReference type="GO" id="GO:0008380">
    <property type="term" value="P:RNA splicing"/>
    <property type="evidence" value="ECO:0007669"/>
    <property type="project" value="UniProtKB-KW"/>
</dbReference>
<dbReference type="CDD" id="cd00593">
    <property type="entry name" value="RIBOc"/>
    <property type="match status" value="2"/>
</dbReference>
<dbReference type="FunFam" id="1.10.1520.10:FF:000009">
    <property type="entry name" value="Ribonuclease III domain-containing protein RNC1, chloroplastic"/>
    <property type="match status" value="1"/>
</dbReference>
<dbReference type="FunFam" id="1.10.1520.10:FF:000011">
    <property type="entry name" value="Ribonuclease III domain-containing protein RNC1, chloroplastic"/>
    <property type="match status" value="1"/>
</dbReference>
<dbReference type="Gene3D" id="1.10.1520.10">
    <property type="entry name" value="Ribonuclease III domain"/>
    <property type="match status" value="2"/>
</dbReference>
<dbReference type="InterPro" id="IPR000999">
    <property type="entry name" value="RNase_III_dom"/>
</dbReference>
<dbReference type="InterPro" id="IPR036389">
    <property type="entry name" value="RNase_III_sf"/>
</dbReference>
<dbReference type="PANTHER" id="PTHR11207">
    <property type="entry name" value="RIBONUCLEASE III"/>
    <property type="match status" value="1"/>
</dbReference>
<dbReference type="PANTHER" id="PTHR11207:SF34">
    <property type="entry name" value="RIBONUCLEASE III DOMAIN-CONTAINING PROTEIN RNC1, CHLOROPLASTIC"/>
    <property type="match status" value="1"/>
</dbReference>
<dbReference type="Pfam" id="PF00636">
    <property type="entry name" value="Ribonuclease_3"/>
    <property type="match status" value="1"/>
</dbReference>
<dbReference type="SMART" id="SM00535">
    <property type="entry name" value="RIBOc"/>
    <property type="match status" value="1"/>
</dbReference>
<dbReference type="SUPFAM" id="SSF69065">
    <property type="entry name" value="RNase III domain-like"/>
    <property type="match status" value="2"/>
</dbReference>
<dbReference type="PROSITE" id="PS50142">
    <property type="entry name" value="RNASE_3_2"/>
    <property type="match status" value="1"/>
</dbReference>
<evidence type="ECO:0000250" key="1">
    <source>
        <dbReference type="UniProtKB" id="A6YSL1"/>
    </source>
</evidence>
<evidence type="ECO:0000255" key="2"/>
<evidence type="ECO:0000255" key="3">
    <source>
        <dbReference type="PROSITE-ProRule" id="PRU00177"/>
    </source>
</evidence>
<evidence type="ECO:0000305" key="4"/>
<evidence type="ECO:0000312" key="5">
    <source>
        <dbReference type="Araport" id="AT4G37510"/>
    </source>
</evidence>
<evidence type="ECO:0000312" key="6">
    <source>
        <dbReference type="EMBL" id="CAB38218.1"/>
    </source>
</evidence>
<comment type="function">
    <text evidence="1">Binds specific group II introns in chloroplasts and facilitates their splicing. Acts on both subgroup IIA and subgroup IIB introns. The substrates of the subgroup II also require the CRM domain proteins CAF1 or CAF2. Binds both single-stranded and double-stranded RNA non-specifically, but lacks endonuclease activity. Required for plastid ribosome biogenesis.</text>
</comment>
<comment type="subunit">
    <text evidence="1">Interacts with RNA. Part of large ribonucleo-protein particles that contain CAF1 and/or CAF2.</text>
</comment>
<comment type="subcellular location">
    <subcellularLocation>
        <location evidence="2">Plastid</location>
        <location evidence="2">Chloroplast</location>
    </subcellularLocation>
</comment>
<sequence>MELCSSSPSSSLLRICSSSAPEISFSSSISQFPSKTQSILTKSRFQNLRICASVTAETQGLPRDSPQRLLKELAQRKTATGPKKKVPPKRFILRPPLDDKKLAERFLNSPQLSLKSFPLLSSCLPSSKLNNADKTWIDEYLLEVKQALGYSLEPSESLGDDNPAKHFDTLLYLAFQHPSCDRARARHVKNGHSRLWFLGQYVLELALTEFFLQRYPRESPGPMRERVFALIGKRYLPKWIKAASLQNLIFPYDDMDKLIRKEREPPVKSVFWALFGAIYLCFGMPEVYRVLFEVFGMDPDADECQPRSRRQLEDVDYVSVEFEGKKLGWQDIATYKPPEDALFAHPRLFRACVPPGMHRFRGNIWDFDSKPKVMQTLGYPLTMNDRIKEITEARNIELGLGLQLCFLHPSKHKFEHPRFCFERLEYVGQKIQDIAMAERLLMKHLDAPGKWLQEKHRRLLMNKFCGRYLREKRLHNFIIYSEEVHDRYEHNRRLRNPATTAVQQAIHGLAYTIYGKPDVRRLMFEVFDFEQIQPKAV</sequence>